<keyword id="KW-0378">Hydrolase</keyword>
<keyword id="KW-0645">Protease</keyword>
<keyword id="KW-1185">Reference proteome</keyword>
<keyword id="KW-0865">Zymogen</keyword>
<organism>
    <name type="scientific">Clostridium acetobutylicum (strain ATCC 824 / DSM 792 / JCM 1419 / IAM 19013 / LMG 5710 / NBRC 13948 / NRRL B-527 / VKM B-1787 / 2291 / W)</name>
    <dbReference type="NCBI Taxonomy" id="272562"/>
    <lineage>
        <taxon>Bacteria</taxon>
        <taxon>Bacillati</taxon>
        <taxon>Bacillota</taxon>
        <taxon>Clostridia</taxon>
        <taxon>Eubacteriales</taxon>
        <taxon>Clostridiaceae</taxon>
        <taxon>Clostridium</taxon>
    </lineage>
</organism>
<reference key="1">
    <citation type="journal article" date="2001" name="J. Bacteriol.">
        <title>Genome sequence and comparative analysis of the solvent-producing bacterium Clostridium acetobutylicum.</title>
        <authorList>
            <person name="Noelling J."/>
            <person name="Breton G."/>
            <person name="Omelchenko M.V."/>
            <person name="Makarova K.S."/>
            <person name="Zeng Q."/>
            <person name="Gibson R."/>
            <person name="Lee H.M."/>
            <person name="Dubois J."/>
            <person name="Qiu D."/>
            <person name="Hitti J."/>
            <person name="Wolf Y.I."/>
            <person name="Tatusov R.L."/>
            <person name="Sabathe F."/>
            <person name="Doucette-Stamm L.A."/>
            <person name="Soucaille P."/>
            <person name="Daly M.J."/>
            <person name="Bennett G.N."/>
            <person name="Koonin E.V."/>
            <person name="Smith D.R."/>
        </authorList>
    </citation>
    <scope>NUCLEOTIDE SEQUENCE [LARGE SCALE GENOMIC DNA]</scope>
    <source>
        <strain>ATCC 824 / DSM 792 / JCM 1419 / IAM 19013 / LMG 5710 / NBRC 13948 / NRRL B-527 / VKM B-1787 / 2291 / W</strain>
    </source>
</reference>
<dbReference type="EC" id="3.4.24.78" evidence="1"/>
<dbReference type="EMBL" id="AE001437">
    <property type="protein sequence ID" value="AAK79246.1"/>
    <property type="molecule type" value="Genomic_DNA"/>
</dbReference>
<dbReference type="PIR" id="C97057">
    <property type="entry name" value="C97057"/>
</dbReference>
<dbReference type="RefSeq" id="NP_347906.1">
    <property type="nucleotide sequence ID" value="NC_003030.1"/>
</dbReference>
<dbReference type="RefSeq" id="WP_010964587.1">
    <property type="nucleotide sequence ID" value="NC_003030.1"/>
</dbReference>
<dbReference type="SMR" id="Q97JJ9"/>
<dbReference type="STRING" id="272562.CA_C1275"/>
<dbReference type="MEROPS" id="A25.001"/>
<dbReference type="GeneID" id="44997781"/>
<dbReference type="KEGG" id="cac:CA_C1275"/>
<dbReference type="PATRIC" id="fig|272562.8.peg.1476"/>
<dbReference type="eggNOG" id="COG0680">
    <property type="taxonomic scope" value="Bacteria"/>
</dbReference>
<dbReference type="HOGENOM" id="CLU_055087_1_0_9"/>
<dbReference type="OrthoDB" id="9777293at2"/>
<dbReference type="Proteomes" id="UP000000814">
    <property type="component" value="Chromosome"/>
</dbReference>
<dbReference type="GO" id="GO:0004222">
    <property type="term" value="F:metalloendopeptidase activity"/>
    <property type="evidence" value="ECO:0007669"/>
    <property type="project" value="UniProtKB-UniRule"/>
</dbReference>
<dbReference type="GO" id="GO:0006508">
    <property type="term" value="P:proteolysis"/>
    <property type="evidence" value="ECO:0007669"/>
    <property type="project" value="UniProtKB-UniRule"/>
</dbReference>
<dbReference type="GO" id="GO:0009847">
    <property type="term" value="P:spore germination"/>
    <property type="evidence" value="ECO:0007669"/>
    <property type="project" value="UniProtKB-UniRule"/>
</dbReference>
<dbReference type="Gene3D" id="3.40.50.1450">
    <property type="entry name" value="HybD-like"/>
    <property type="match status" value="1"/>
</dbReference>
<dbReference type="HAMAP" id="MF_00626">
    <property type="entry name" value="Germination_prot"/>
    <property type="match status" value="1"/>
</dbReference>
<dbReference type="InterPro" id="IPR023430">
    <property type="entry name" value="Pept_HybD-like_dom_sf"/>
</dbReference>
<dbReference type="InterPro" id="IPR005080">
    <property type="entry name" value="Peptidase_A25"/>
</dbReference>
<dbReference type="NCBIfam" id="TIGR01441">
    <property type="entry name" value="GPR"/>
    <property type="match status" value="1"/>
</dbReference>
<dbReference type="Pfam" id="PF03418">
    <property type="entry name" value="Peptidase_A25"/>
    <property type="match status" value="1"/>
</dbReference>
<dbReference type="PIRSF" id="PIRSF019549">
    <property type="entry name" value="Peptidase_A25"/>
    <property type="match status" value="1"/>
</dbReference>
<dbReference type="SUPFAM" id="SSF53163">
    <property type="entry name" value="HybD-like"/>
    <property type="match status" value="1"/>
</dbReference>
<protein>
    <recommendedName>
        <fullName evidence="1">Germination protease</fullName>
        <ecNumber evidence="1">3.4.24.78</ecNumber>
    </recommendedName>
    <alternativeName>
        <fullName evidence="1">GPR endopeptidase</fullName>
    </alternativeName>
    <alternativeName>
        <fullName evidence="1">Germination proteinase</fullName>
    </alternativeName>
    <alternativeName>
        <fullName evidence="1">Spore protease</fullName>
    </alternativeName>
</protein>
<sequence length="327" mass="35651">MNSVRTDLAVEAREMYCEKTENGDNGVRVDTKRIEDIEITTVDVLNDKGEERIRKQKGTYITLDIPKVTLYDSEDIEEISKVFADELSKIISKAKLDSSMTVLVVGLGNWNITPDSLGPKVIGKLMVTRHLKKYIPDSIDEGIRPVCAVAPGVLGITGMETGEIIRGIVQNIKPDLIVCIDALAARKMGRVNSTIQIGNTGISPGSGVGNMRMELSQKTLGVPVIAVGVPTVVDAATMANDTIDIVIEKMKGEVSEDSKFYSLLKAIDTEEKSQLIYEVLNPYVGDLLVTPKEVDMIMETLSKIIASGINIALQPALELSEINKYVN</sequence>
<gene>
    <name evidence="1" type="primary">gpr</name>
    <name type="ordered locus">CA_C1275</name>
</gene>
<evidence type="ECO:0000255" key="1">
    <source>
        <dbReference type="HAMAP-Rule" id="MF_00626"/>
    </source>
</evidence>
<proteinExistence type="inferred from homology"/>
<name>GPR_CLOAB</name>
<comment type="function">
    <text evidence="1">Initiates the rapid degradation of small, acid-soluble proteins during spore germination.</text>
</comment>
<comment type="catalytic activity">
    <reaction evidence="1">
        <text>Endopeptidase action with P4 Glu or Asp, P1 preferably Glu &gt; Asp, P1' hydrophobic and P2' Ala.</text>
        <dbReference type="EC" id="3.4.24.78"/>
    </reaction>
</comment>
<comment type="subunit">
    <text evidence="1">Homotetramer.</text>
</comment>
<comment type="PTM">
    <text evidence="1">Autoproteolytically processed. The inactive tetrameric zymogen termed p46 autoprocesses to a smaller form termed p41, which is active only during spore germination.</text>
</comment>
<comment type="similarity">
    <text evidence="1">Belongs to the peptidase A25 family.</text>
</comment>
<feature type="propeptide" id="PRO_0000026872" evidence="1">
    <location>
        <begin position="1"/>
        <end position="7"/>
    </location>
</feature>
<feature type="chain" id="PRO_0000026873" description="Germination protease">
    <location>
        <begin position="8"/>
        <end position="327"/>
    </location>
</feature>
<accession>Q97JJ9</accession>